<dbReference type="EC" id="2.7.11.1" evidence="7 10 12"/>
<dbReference type="EMBL" id="U64205">
    <property type="protein sequence ID" value="AAC15093.1"/>
    <property type="molecule type" value="mRNA"/>
</dbReference>
<dbReference type="EMBL" id="AF159295">
    <property type="protein sequence ID" value="AAD48007.1"/>
    <property type="molecule type" value="mRNA"/>
</dbReference>
<dbReference type="EMBL" id="AF387637">
    <property type="protein sequence ID" value="AAK82367.1"/>
    <property type="molecule type" value="mRNA"/>
</dbReference>
<dbReference type="EMBL" id="AF465413">
    <property type="protein sequence ID" value="AAL69982.1"/>
    <property type="molecule type" value="mRNA"/>
</dbReference>
<dbReference type="EMBL" id="M80359">
    <property type="protein sequence ID" value="AAA59991.1"/>
    <property type="molecule type" value="mRNA"/>
</dbReference>
<dbReference type="EMBL" id="BX161395">
    <property type="protein sequence ID" value="CAD61882.1"/>
    <property type="molecule type" value="mRNA"/>
</dbReference>
<dbReference type="EMBL" id="AL133367">
    <property type="status" value="NOT_ANNOTATED_CDS"/>
    <property type="molecule type" value="Genomic_DNA"/>
</dbReference>
<dbReference type="EMBL" id="KF456011">
    <property type="status" value="NOT_ANNOTATED_CDS"/>
    <property type="molecule type" value="Genomic_DNA"/>
</dbReference>
<dbReference type="EMBL" id="CH471061">
    <property type="protein sequence ID" value="EAW81813.1"/>
    <property type="molecule type" value="Genomic_DNA"/>
</dbReference>
<dbReference type="EMBL" id="CH471061">
    <property type="protein sequence ID" value="EAW81815.1"/>
    <property type="molecule type" value="Genomic_DNA"/>
</dbReference>
<dbReference type="EMBL" id="CH471061">
    <property type="protein sequence ID" value="EAW81817.1"/>
    <property type="molecule type" value="Genomic_DNA"/>
</dbReference>
<dbReference type="EMBL" id="BC024773">
    <property type="protein sequence ID" value="AAH24773.1"/>
    <property type="molecule type" value="mRNA"/>
</dbReference>
<dbReference type="EMBL" id="AF170723">
    <property type="protein sequence ID" value="AAD51631.1"/>
    <property type="molecule type" value="mRNA"/>
</dbReference>
<dbReference type="CCDS" id="CCDS41993.1">
    <molecule id="P27448-3"/>
</dbReference>
<dbReference type="CCDS" id="CCDS45165.1">
    <molecule id="P27448-5"/>
</dbReference>
<dbReference type="CCDS" id="CCDS45166.1">
    <molecule id="P27448-4"/>
</dbReference>
<dbReference type="CCDS" id="CCDS45167.1">
    <molecule id="P27448-8"/>
</dbReference>
<dbReference type="CCDS" id="CCDS55947.1">
    <molecule id="P27448-6"/>
</dbReference>
<dbReference type="PIR" id="S27966">
    <property type="entry name" value="S27966"/>
</dbReference>
<dbReference type="RefSeq" id="NP_001122390.2">
    <molecule id="P27448-5"/>
    <property type="nucleotide sequence ID" value="NM_001128918.3"/>
</dbReference>
<dbReference type="RefSeq" id="NP_001122391.2">
    <molecule id="P27448-4"/>
    <property type="nucleotide sequence ID" value="NM_001128919.3"/>
</dbReference>
<dbReference type="RefSeq" id="NP_001122392.2">
    <molecule id="P27448-6"/>
    <property type="nucleotide sequence ID" value="NM_001128920.3"/>
</dbReference>
<dbReference type="RefSeq" id="NP_001122393.2">
    <molecule id="P27448-8"/>
    <property type="nucleotide sequence ID" value="NM_001128921.3"/>
</dbReference>
<dbReference type="RefSeq" id="NP_002367.5">
    <molecule id="P27448-3"/>
    <property type="nucleotide sequence ID" value="NM_002376.6"/>
</dbReference>
<dbReference type="PDB" id="2QNJ">
    <property type="method" value="X-ray"/>
    <property type="resolution" value="2.70 A"/>
    <property type="chains" value="A/B=48-370"/>
</dbReference>
<dbReference type="PDB" id="3FE3">
    <property type="method" value="X-ray"/>
    <property type="resolution" value="1.90 A"/>
    <property type="chains" value="A/B=41-367"/>
</dbReference>
<dbReference type="PDB" id="7P1L">
    <property type="method" value="X-ray"/>
    <property type="resolution" value="1.95 A"/>
    <property type="chains" value="A/B=48-366"/>
</dbReference>
<dbReference type="PDB" id="8UOH">
    <property type="method" value="X-ray"/>
    <property type="resolution" value="2.15 A"/>
    <property type="chains" value="A/B=48-370"/>
</dbReference>
<dbReference type="PDB" id="8UOI">
    <property type="method" value="X-ray"/>
    <property type="resolution" value="1.80 A"/>
    <property type="chains" value="A=48-370"/>
</dbReference>
<dbReference type="PDB" id="8UOJ">
    <property type="method" value="X-ray"/>
    <property type="resolution" value="1.60 A"/>
    <property type="chains" value="A=48-370"/>
</dbReference>
<dbReference type="PDB" id="8UOK">
    <property type="method" value="X-ray"/>
    <property type="resolution" value="1.85 A"/>
    <property type="chains" value="A/B=48-370"/>
</dbReference>
<dbReference type="PDB" id="8UOL">
    <property type="method" value="X-ray"/>
    <property type="resolution" value="1.90 A"/>
    <property type="chains" value="A/B=48-370"/>
</dbReference>
<dbReference type="PDBsum" id="2QNJ"/>
<dbReference type="PDBsum" id="3FE3"/>
<dbReference type="PDBsum" id="7P1L"/>
<dbReference type="PDBsum" id="8UOH"/>
<dbReference type="PDBsum" id="8UOI"/>
<dbReference type="PDBsum" id="8UOJ"/>
<dbReference type="PDBsum" id="8UOK"/>
<dbReference type="PDBsum" id="8UOL"/>
<dbReference type="BMRB" id="P27448"/>
<dbReference type="SMR" id="P27448"/>
<dbReference type="BioGRID" id="110310">
    <property type="interactions" value="263"/>
</dbReference>
<dbReference type="DIP" id="DIP-34637N"/>
<dbReference type="FunCoup" id="P27448">
    <property type="interactions" value="2660"/>
</dbReference>
<dbReference type="IntAct" id="P27448">
    <property type="interactions" value="137"/>
</dbReference>
<dbReference type="MINT" id="P27448"/>
<dbReference type="STRING" id="9606.ENSP00000411397"/>
<dbReference type="BindingDB" id="P27448"/>
<dbReference type="ChEMBL" id="CHEMBL5600"/>
<dbReference type="DrugBank" id="DB17277">
    <property type="generic name" value="CBP-501"/>
</dbReference>
<dbReference type="DrugBank" id="DB12010">
    <property type="generic name" value="Fostamatinib"/>
</dbReference>
<dbReference type="DrugCentral" id="P27448"/>
<dbReference type="GuidetoPHARMACOLOGY" id="2099"/>
<dbReference type="GlyGen" id="P27448">
    <property type="glycosylation" value="5 sites, 4 N-linked glycans (3 sites), 1 O-linked glycan (1 site)"/>
</dbReference>
<dbReference type="iPTMnet" id="P27448"/>
<dbReference type="MetOSite" id="P27448"/>
<dbReference type="PhosphoSitePlus" id="P27448"/>
<dbReference type="BioMuta" id="MARK3"/>
<dbReference type="DMDM" id="341941142"/>
<dbReference type="CPTAC" id="non-CPTAC-3196"/>
<dbReference type="CPTAC" id="non-CPTAC-3197"/>
<dbReference type="jPOST" id="P27448"/>
<dbReference type="MassIVE" id="P27448"/>
<dbReference type="PaxDb" id="9606-ENSP00000411397"/>
<dbReference type="PeptideAtlas" id="P27448"/>
<dbReference type="ProteomicsDB" id="54386">
    <molecule id="P27448-5"/>
</dbReference>
<dbReference type="ProteomicsDB" id="54387">
    <molecule id="P27448-2"/>
</dbReference>
<dbReference type="ProteomicsDB" id="54388">
    <molecule id="P27448-3"/>
</dbReference>
<dbReference type="ProteomicsDB" id="54389">
    <molecule id="P27448-4"/>
</dbReference>
<dbReference type="ProteomicsDB" id="54390">
    <molecule id="P27448-6"/>
</dbReference>
<dbReference type="ProteomicsDB" id="54391">
    <molecule id="P27448-7"/>
</dbReference>
<dbReference type="ProteomicsDB" id="54392">
    <molecule id="P27448-8"/>
</dbReference>
<dbReference type="Pumba" id="P27448"/>
<dbReference type="Antibodypedia" id="6515">
    <property type="antibodies" value="499 antibodies from 38 providers"/>
</dbReference>
<dbReference type="DNASU" id="4140"/>
<dbReference type="Ensembl" id="ENST00000216288.11">
    <molecule id="P27448-6"/>
    <property type="protein sequence ID" value="ENSP00000216288.7"/>
    <property type="gene ID" value="ENSG00000075413.19"/>
</dbReference>
<dbReference type="Ensembl" id="ENST00000303622.13">
    <molecule id="P27448-3"/>
    <property type="protein sequence ID" value="ENSP00000303698.9"/>
    <property type="gene ID" value="ENSG00000075413.19"/>
</dbReference>
<dbReference type="Ensembl" id="ENST00000416682.6">
    <molecule id="P27448-2"/>
    <property type="protein sequence ID" value="ENSP00000408092.2"/>
    <property type="gene ID" value="ENSG00000075413.19"/>
</dbReference>
<dbReference type="Ensembl" id="ENST00000429436.7">
    <molecule id="P27448-5"/>
    <property type="protein sequence ID" value="ENSP00000411397.2"/>
    <property type="gene ID" value="ENSG00000075413.19"/>
</dbReference>
<dbReference type="Ensembl" id="ENST00000440884.7">
    <molecule id="P27448-8"/>
    <property type="protein sequence ID" value="ENSP00000402104.3"/>
    <property type="gene ID" value="ENSG00000075413.19"/>
</dbReference>
<dbReference type="Ensembl" id="ENST00000553942.5">
    <molecule id="P27448-4"/>
    <property type="protein sequence ID" value="ENSP00000450772.1"/>
    <property type="gene ID" value="ENSG00000075413.19"/>
</dbReference>
<dbReference type="GeneID" id="4140"/>
<dbReference type="KEGG" id="hsa:4140"/>
<dbReference type="MANE-Select" id="ENST00000429436.7">
    <property type="protein sequence ID" value="ENSP00000411397.2"/>
    <property type="RefSeq nucleotide sequence ID" value="NM_001128918.3"/>
    <property type="RefSeq protein sequence ID" value="NP_001122390.2"/>
</dbReference>
<dbReference type="UCSC" id="uc001ymw.5">
    <molecule id="P27448-5"/>
    <property type="organism name" value="human"/>
</dbReference>
<dbReference type="UCSC" id="uc001ymy.5">
    <property type="organism name" value="human"/>
</dbReference>
<dbReference type="UCSC" id="uc001ymz.5">
    <property type="organism name" value="human"/>
</dbReference>
<dbReference type="UCSC" id="uc001yna.5">
    <property type="organism name" value="human"/>
</dbReference>
<dbReference type="AGR" id="HGNC:6897"/>
<dbReference type="CTD" id="4140"/>
<dbReference type="DisGeNET" id="4140"/>
<dbReference type="GeneCards" id="MARK3"/>
<dbReference type="HGNC" id="HGNC:6897">
    <property type="gene designation" value="MARK3"/>
</dbReference>
<dbReference type="HPA" id="ENSG00000075413">
    <property type="expression patterns" value="Low tissue specificity"/>
</dbReference>
<dbReference type="MalaCards" id="MARK3"/>
<dbReference type="MIM" id="602678">
    <property type="type" value="gene"/>
</dbReference>
<dbReference type="MIM" id="618283">
    <property type="type" value="phenotype"/>
</dbReference>
<dbReference type="neXtProt" id="NX_P27448"/>
<dbReference type="OpenTargets" id="ENSG00000075413"/>
<dbReference type="PharmGKB" id="PA30640"/>
<dbReference type="VEuPathDB" id="HostDB:ENSG00000075413"/>
<dbReference type="eggNOG" id="KOG0586">
    <property type="taxonomic scope" value="Eukaryota"/>
</dbReference>
<dbReference type="GeneTree" id="ENSGT00940000154862"/>
<dbReference type="InParanoid" id="P27448"/>
<dbReference type="OMA" id="AKFRQGC"/>
<dbReference type="OrthoDB" id="504170at2759"/>
<dbReference type="PAN-GO" id="P27448">
    <property type="GO annotations" value="6 GO annotations based on evolutionary models"/>
</dbReference>
<dbReference type="TreeFam" id="TF315213"/>
<dbReference type="PathwayCommons" id="P27448"/>
<dbReference type="Reactome" id="R-HSA-5673000">
    <property type="pathway name" value="RAF activation"/>
</dbReference>
<dbReference type="Reactome" id="R-HSA-5674135">
    <property type="pathway name" value="MAP2K and MAPK activation"/>
</dbReference>
<dbReference type="Reactome" id="R-HSA-5675221">
    <property type="pathway name" value="Negative regulation of MAPK pathway"/>
</dbReference>
<dbReference type="Reactome" id="R-HSA-6802946">
    <property type="pathway name" value="Signaling by moderate kinase activity BRAF mutants"/>
</dbReference>
<dbReference type="Reactome" id="R-HSA-6802948">
    <property type="pathway name" value="Signaling by high-kinase activity BRAF mutants"/>
</dbReference>
<dbReference type="Reactome" id="R-HSA-6802952">
    <property type="pathway name" value="Signaling by BRAF and RAF1 fusions"/>
</dbReference>
<dbReference type="Reactome" id="R-HSA-6802955">
    <property type="pathway name" value="Paradoxical activation of RAF signaling by kinase inactive BRAF"/>
</dbReference>
<dbReference type="Reactome" id="R-HSA-9649948">
    <property type="pathway name" value="Signaling downstream of RAS mutants"/>
</dbReference>
<dbReference type="Reactome" id="R-HSA-9656223">
    <property type="pathway name" value="Signaling by RAF1 mutants"/>
</dbReference>
<dbReference type="Reactome" id="R-HSA-9856649">
    <property type="pathway name" value="Transcriptional and post-translational regulation of MITF-M expression and activity"/>
</dbReference>
<dbReference type="SignaLink" id="P27448"/>
<dbReference type="SIGNOR" id="P27448"/>
<dbReference type="BioGRID-ORCS" id="4140">
    <property type="hits" value="30 hits in 1203 CRISPR screens"/>
</dbReference>
<dbReference type="ChiTaRS" id="MARK3">
    <property type="organism name" value="human"/>
</dbReference>
<dbReference type="EvolutionaryTrace" id="P27448"/>
<dbReference type="GeneWiki" id="MARK3"/>
<dbReference type="GenomeRNAi" id="4140"/>
<dbReference type="Pharos" id="P27448">
    <property type="development level" value="Tchem"/>
</dbReference>
<dbReference type="PRO" id="PR:P27448"/>
<dbReference type="Proteomes" id="UP000005640">
    <property type="component" value="Chromosome 14"/>
</dbReference>
<dbReference type="RNAct" id="P27448">
    <property type="molecule type" value="protein"/>
</dbReference>
<dbReference type="Bgee" id="ENSG00000075413">
    <property type="expression patterns" value="Expressed in cerebellar hemisphere and 205 other cell types or tissues"/>
</dbReference>
<dbReference type="ExpressionAtlas" id="P27448">
    <property type="expression patterns" value="baseline and differential"/>
</dbReference>
<dbReference type="GO" id="GO:0005737">
    <property type="term" value="C:cytoplasm"/>
    <property type="evidence" value="ECO:0000314"/>
    <property type="project" value="UniProtKB"/>
</dbReference>
<dbReference type="GO" id="GO:0005829">
    <property type="term" value="C:cytosol"/>
    <property type="evidence" value="ECO:0000304"/>
    <property type="project" value="Reactome"/>
</dbReference>
<dbReference type="GO" id="GO:0030425">
    <property type="term" value="C:dendrite"/>
    <property type="evidence" value="ECO:0000314"/>
    <property type="project" value="UniProtKB"/>
</dbReference>
<dbReference type="GO" id="GO:0070062">
    <property type="term" value="C:extracellular exosome"/>
    <property type="evidence" value="ECO:0007005"/>
    <property type="project" value="UniProtKB"/>
</dbReference>
<dbReference type="GO" id="GO:0005886">
    <property type="term" value="C:plasma membrane"/>
    <property type="evidence" value="ECO:0000314"/>
    <property type="project" value="UniProtKB"/>
</dbReference>
<dbReference type="GO" id="GO:0005524">
    <property type="term" value="F:ATP binding"/>
    <property type="evidence" value="ECO:0007669"/>
    <property type="project" value="UniProtKB-KW"/>
</dbReference>
<dbReference type="GO" id="GO:0019903">
    <property type="term" value="F:protein phosphatase binding"/>
    <property type="evidence" value="ECO:0000353"/>
    <property type="project" value="ARUK-UCL"/>
</dbReference>
<dbReference type="GO" id="GO:0106310">
    <property type="term" value="F:protein serine kinase activity"/>
    <property type="evidence" value="ECO:0007669"/>
    <property type="project" value="RHEA"/>
</dbReference>
<dbReference type="GO" id="GO:0004674">
    <property type="term" value="F:protein serine/threonine kinase activity"/>
    <property type="evidence" value="ECO:0000314"/>
    <property type="project" value="UniProtKB"/>
</dbReference>
<dbReference type="GO" id="GO:0048156">
    <property type="term" value="F:tau protein binding"/>
    <property type="evidence" value="ECO:0000303"/>
    <property type="project" value="ARUK-UCL"/>
</dbReference>
<dbReference type="GO" id="GO:0050321">
    <property type="term" value="F:tau-protein kinase activity"/>
    <property type="evidence" value="ECO:0000315"/>
    <property type="project" value="UniProtKB"/>
</dbReference>
<dbReference type="GO" id="GO:0035556">
    <property type="term" value="P:intracellular signal transduction"/>
    <property type="evidence" value="ECO:0000318"/>
    <property type="project" value="GO_Central"/>
</dbReference>
<dbReference type="GO" id="GO:0000226">
    <property type="term" value="P:microtubule cytoskeleton organization"/>
    <property type="evidence" value="ECO:0000318"/>
    <property type="project" value="GO_Central"/>
</dbReference>
<dbReference type="GO" id="GO:0035331">
    <property type="term" value="P:negative regulation of hippo signaling"/>
    <property type="evidence" value="ECO:0000314"/>
    <property type="project" value="UniProtKB"/>
</dbReference>
<dbReference type="GO" id="GO:1900181">
    <property type="term" value="P:negative regulation of protein localization to nucleus"/>
    <property type="evidence" value="ECO:0000314"/>
    <property type="project" value="UniProtKB"/>
</dbReference>
<dbReference type="GO" id="GO:0006468">
    <property type="term" value="P:protein phosphorylation"/>
    <property type="evidence" value="ECO:0000315"/>
    <property type="project" value="UniProtKB"/>
</dbReference>
<dbReference type="GO" id="GO:0010389">
    <property type="term" value="P:regulation of G2/M transition of mitotic cell cycle"/>
    <property type="evidence" value="ECO:0000314"/>
    <property type="project" value="ARUK-UCL"/>
</dbReference>
<dbReference type="CDD" id="cd12196">
    <property type="entry name" value="MARK1-3_C"/>
    <property type="match status" value="1"/>
</dbReference>
<dbReference type="CDD" id="cd14072">
    <property type="entry name" value="STKc_MARK"/>
    <property type="match status" value="1"/>
</dbReference>
<dbReference type="CDD" id="cd14407">
    <property type="entry name" value="UBA_MARK3_4"/>
    <property type="match status" value="1"/>
</dbReference>
<dbReference type="FunFam" id="1.10.510.10:FF:001032">
    <property type="entry name" value="KP78b, isoform A"/>
    <property type="match status" value="1"/>
</dbReference>
<dbReference type="FunFam" id="1.10.8.10:FF:000005">
    <property type="entry name" value="Non-specific serine/threonine protein kinase"/>
    <property type="match status" value="1"/>
</dbReference>
<dbReference type="FunFam" id="3.30.200.20:FF:000003">
    <property type="entry name" value="Non-specific serine/threonine protein kinase"/>
    <property type="match status" value="1"/>
</dbReference>
<dbReference type="FunFam" id="3.30.310.80:FF:000001">
    <property type="entry name" value="Non-specific serine/threonine protein kinase"/>
    <property type="match status" value="1"/>
</dbReference>
<dbReference type="Gene3D" id="1.10.8.10">
    <property type="entry name" value="DNA helicase RuvA subunit, C-terminal domain"/>
    <property type="match status" value="1"/>
</dbReference>
<dbReference type="Gene3D" id="3.30.310.80">
    <property type="entry name" value="Kinase associated domain 1, KA1"/>
    <property type="match status" value="1"/>
</dbReference>
<dbReference type="Gene3D" id="3.30.200.20">
    <property type="entry name" value="Phosphorylase Kinase, domain 1"/>
    <property type="match status" value="1"/>
</dbReference>
<dbReference type="Gene3D" id="1.10.510.10">
    <property type="entry name" value="Transferase(Phosphotransferase) domain 1"/>
    <property type="match status" value="1"/>
</dbReference>
<dbReference type="InterPro" id="IPR028375">
    <property type="entry name" value="KA1/Ssp2_C"/>
</dbReference>
<dbReference type="InterPro" id="IPR001772">
    <property type="entry name" value="KA1_dom"/>
</dbReference>
<dbReference type="InterPro" id="IPR011009">
    <property type="entry name" value="Kinase-like_dom_sf"/>
</dbReference>
<dbReference type="InterPro" id="IPR049508">
    <property type="entry name" value="MARK1-4_cat"/>
</dbReference>
<dbReference type="InterPro" id="IPR000719">
    <property type="entry name" value="Prot_kinase_dom"/>
</dbReference>
<dbReference type="InterPro" id="IPR017441">
    <property type="entry name" value="Protein_kinase_ATP_BS"/>
</dbReference>
<dbReference type="InterPro" id="IPR008271">
    <property type="entry name" value="Ser/Thr_kinase_AS"/>
</dbReference>
<dbReference type="InterPro" id="IPR015940">
    <property type="entry name" value="UBA"/>
</dbReference>
<dbReference type="PANTHER" id="PTHR24346">
    <property type="entry name" value="MAP/MICROTUBULE AFFINITY-REGULATING KINASE"/>
    <property type="match status" value="1"/>
</dbReference>
<dbReference type="PANTHER" id="PTHR24346:SF1">
    <property type="entry name" value="MAP_MICROTUBULE AFFINITY-REGULATING KINASE 3"/>
    <property type="match status" value="1"/>
</dbReference>
<dbReference type="Pfam" id="PF02149">
    <property type="entry name" value="KA1"/>
    <property type="match status" value="1"/>
</dbReference>
<dbReference type="Pfam" id="PF00069">
    <property type="entry name" value="Pkinase"/>
    <property type="match status" value="1"/>
</dbReference>
<dbReference type="Pfam" id="PF00627">
    <property type="entry name" value="UBA"/>
    <property type="match status" value="1"/>
</dbReference>
<dbReference type="SMART" id="SM00220">
    <property type="entry name" value="S_TKc"/>
    <property type="match status" value="1"/>
</dbReference>
<dbReference type="SMART" id="SM00165">
    <property type="entry name" value="UBA"/>
    <property type="match status" value="1"/>
</dbReference>
<dbReference type="SUPFAM" id="SSF103243">
    <property type="entry name" value="KA1-like"/>
    <property type="match status" value="1"/>
</dbReference>
<dbReference type="SUPFAM" id="SSF56112">
    <property type="entry name" value="Protein kinase-like (PK-like)"/>
    <property type="match status" value="1"/>
</dbReference>
<dbReference type="PROSITE" id="PS50032">
    <property type="entry name" value="KA1"/>
    <property type="match status" value="1"/>
</dbReference>
<dbReference type="PROSITE" id="PS00107">
    <property type="entry name" value="PROTEIN_KINASE_ATP"/>
    <property type="match status" value="1"/>
</dbReference>
<dbReference type="PROSITE" id="PS50011">
    <property type="entry name" value="PROTEIN_KINASE_DOM"/>
    <property type="match status" value="1"/>
</dbReference>
<dbReference type="PROSITE" id="PS00108">
    <property type="entry name" value="PROTEIN_KINASE_ST"/>
    <property type="match status" value="1"/>
</dbReference>
<dbReference type="PROSITE" id="PS50030">
    <property type="entry name" value="UBA"/>
    <property type="match status" value="1"/>
</dbReference>
<name>MARK3_HUMAN</name>
<protein>
    <recommendedName>
        <fullName>MAP/microtubule affinity-regulating kinase 3</fullName>
        <ecNumber evidence="7 10 12">2.7.11.1</ecNumber>
    </recommendedName>
    <alternativeName>
        <fullName>C-TAK1</fullName>
        <shortName>cTAK1</shortName>
    </alternativeName>
    <alternativeName>
        <fullName>Cdc25C-associated protein kinase 1</fullName>
    </alternativeName>
    <alternativeName>
        <fullName>ELKL motif kinase 2</fullName>
        <shortName>EMK-2</shortName>
    </alternativeName>
    <alternativeName>
        <fullName>Protein kinase STK10</fullName>
    </alternativeName>
    <alternativeName>
        <fullName>Ser/Thr protein kinase PAR-1</fullName>
        <shortName>Par-1a</shortName>
    </alternativeName>
    <alternativeName>
        <fullName>Serine/threonine-protein kinase p78</fullName>
    </alternativeName>
</protein>
<gene>
    <name type="primary">MARK3</name>
    <name type="synonym">CTAK1</name>
    <name type="synonym">EMK2</name>
</gene>
<keyword id="KW-0002">3D-structure</keyword>
<keyword id="KW-0025">Alternative splicing</keyword>
<keyword id="KW-0067">ATP-binding</keyword>
<keyword id="KW-1003">Cell membrane</keyword>
<keyword id="KW-0966">Cell projection</keyword>
<keyword id="KW-0963">Cytoplasm</keyword>
<keyword id="KW-0225">Disease variant</keyword>
<keyword id="KW-0418">Kinase</keyword>
<keyword id="KW-0472">Membrane</keyword>
<keyword id="KW-0547">Nucleotide-binding</keyword>
<keyword id="KW-0597">Phosphoprotein</keyword>
<keyword id="KW-1267">Proteomics identification</keyword>
<keyword id="KW-1185">Reference proteome</keyword>
<keyword id="KW-0723">Serine/threonine-protein kinase</keyword>
<keyword id="KW-0808">Transferase</keyword>
<comment type="function">
    <text evidence="7 10 12 15 16">Serine/threonine-protein kinase (PubMed:16822840, PubMed:16980613, PubMed:23666762). Involved in the specific phosphorylation of microtubule-associated proteins for MAP2 and MAP4. Phosphorylates the microtubule-associated protein MAPT/TAU (PubMed:23666762). Phosphorylates CDC25C on 'Ser-216' (PubMed:12941695). Regulates localization and activity of some histone deacetylases by mediating phosphorylation of HDAC7, promoting subsequent interaction between HDAC7 and 14-3-3 and export from the nucleus (PubMed:16980613). Regulates localization and activity of MITF by mediating its phosphorylation, promoting subsequent interaction between MITF and 14-3-3 and retention in the cytosol (PubMed:16822840). Negatively regulates the Hippo signaling pathway and antagonizes the phosphorylation of LATS1. Cooperates with DLG5 to inhibit the kinase activity of STK3/MST2 toward LATS1 (PubMed:28087714). Phosphorylates PKP2 and KSR1 (PubMed:12941695).</text>
</comment>
<comment type="catalytic activity">
    <reaction evidence="7 10 12">
        <text>L-seryl-[protein] + ATP = O-phospho-L-seryl-[protein] + ADP + H(+)</text>
        <dbReference type="Rhea" id="RHEA:17989"/>
        <dbReference type="Rhea" id="RHEA-COMP:9863"/>
        <dbReference type="Rhea" id="RHEA-COMP:11604"/>
        <dbReference type="ChEBI" id="CHEBI:15378"/>
        <dbReference type="ChEBI" id="CHEBI:29999"/>
        <dbReference type="ChEBI" id="CHEBI:30616"/>
        <dbReference type="ChEBI" id="CHEBI:83421"/>
        <dbReference type="ChEBI" id="CHEBI:456216"/>
        <dbReference type="EC" id="2.7.11.1"/>
    </reaction>
</comment>
<comment type="catalytic activity">
    <reaction evidence="7 12">
        <text>L-threonyl-[protein] + ATP = O-phospho-L-threonyl-[protein] + ADP + H(+)</text>
        <dbReference type="Rhea" id="RHEA:46608"/>
        <dbReference type="Rhea" id="RHEA-COMP:11060"/>
        <dbReference type="Rhea" id="RHEA-COMP:11605"/>
        <dbReference type="ChEBI" id="CHEBI:15378"/>
        <dbReference type="ChEBI" id="CHEBI:30013"/>
        <dbReference type="ChEBI" id="CHEBI:30616"/>
        <dbReference type="ChEBI" id="CHEBI:61977"/>
        <dbReference type="ChEBI" id="CHEBI:456216"/>
        <dbReference type="EC" id="2.7.11.1"/>
    </reaction>
</comment>
<comment type="activity regulation">
    <text evidence="8">Activated by phosphorylation on Thr-211. Inhibited by phosphorylation on Thr-564.</text>
</comment>
<comment type="subunit">
    <text evidence="7 11 15 16">Interacts with MAPT/TAU (PubMed:23666762). Interacts with DLG5 (via coiled-coil domain). Interacts with STK3/MST2 and STK4/MST1 in the presence of DLG5 (PubMed:28087714). Interacts with YWHAB, YWHAG, YWHAQ and YWHAZ (PubMed:16959763). Interacts with PKP2 (via N-terminus) (PubMed:12941695). Interacts with CDC25C (PubMed:12941695). Interacts with KSR1 (PubMed:12941695).</text>
</comment>
<comment type="interaction">
    <interactant intactId="EBI-707595">
        <id>P27448</id>
    </interactant>
    <interactant intactId="EBI-707573">
        <id>Q8WXK3</id>
        <label>ASB13</label>
    </interactant>
    <organismsDiffer>false</organismsDiffer>
    <experiments>2</experiments>
</comment>
<comment type="interaction">
    <interactant intactId="EBI-707595">
        <id>P27448</id>
    </interactant>
    <interactant intactId="EBI-11173743">
        <id>O60741</id>
        <label>HCN1</label>
    </interactant>
    <organismsDiffer>false</organismsDiffer>
    <experiments>5</experiments>
</comment>
<comment type="interaction">
    <interactant intactId="EBI-707595">
        <id>P27448</id>
    </interactant>
    <interactant intactId="EBI-1043236">
        <id>Q86UR5</id>
        <label>RIMS1</label>
    </interactant>
    <organismsDiffer>false</organismsDiffer>
    <experiments>3</experiments>
</comment>
<comment type="interaction">
    <interactant intactId="EBI-707595">
        <id>P27448</id>
    </interactant>
    <interactant intactId="EBI-476295">
        <id>P31947</id>
        <label>SFN</label>
    </interactant>
    <organismsDiffer>false</organismsDiffer>
    <experiments>5</experiments>
</comment>
<comment type="interaction">
    <interactant intactId="EBI-707595">
        <id>P27448</id>
    </interactant>
    <interactant intactId="EBI-710310">
        <id>Q15560</id>
        <label>TCEA2</label>
    </interactant>
    <organismsDiffer>false</organismsDiffer>
    <experiments>2</experiments>
</comment>
<comment type="interaction">
    <interactant intactId="EBI-707595">
        <id>P27448</id>
    </interactant>
    <interactant intactId="EBI-359815">
        <id>P31946</id>
        <label>YWHAB</label>
    </interactant>
    <organismsDiffer>false</organismsDiffer>
    <experiments>11</experiments>
</comment>
<comment type="interaction">
    <interactant intactId="EBI-707595">
        <id>P27448</id>
    </interactant>
    <interactant intactId="EBI-356498">
        <id>P62258</id>
        <label>YWHAE</label>
    </interactant>
    <organismsDiffer>false</organismsDiffer>
    <experiments>9</experiments>
</comment>
<comment type="interaction">
    <interactant intactId="EBI-707595">
        <id>P27448</id>
    </interactant>
    <interactant intactId="EBI-359832">
        <id>P61981</id>
        <label>YWHAG</label>
    </interactant>
    <organismsDiffer>false</organismsDiffer>
    <experiments>11</experiments>
</comment>
<comment type="interaction">
    <interactant intactId="EBI-707595">
        <id>P27448</id>
    </interactant>
    <interactant intactId="EBI-306940">
        <id>Q04917</id>
        <label>YWHAH</label>
    </interactant>
    <organismsDiffer>false</organismsDiffer>
    <experiments>13</experiments>
</comment>
<comment type="interaction">
    <interactant intactId="EBI-707595">
        <id>P27448</id>
    </interactant>
    <interactant intactId="EBI-347088">
        <id>P63104</id>
        <label>YWHAZ</label>
    </interactant>
    <organismsDiffer>false</organismsDiffer>
    <experiments>17</experiments>
</comment>
<comment type="interaction">
    <interactant intactId="EBI-707595">
        <id>P27448</id>
    </interactant>
    <interactant intactId="EBI-25489144">
        <id>Q6S8E0</id>
        <label>ORF9b</label>
    </interactant>
    <organismsDiffer>true</organismsDiffer>
    <experiments>2</experiments>
</comment>
<comment type="interaction">
    <interactant intactId="EBI-707595">
        <id>P27448</id>
    </interactant>
    <interactant intactId="EBI-7970002">
        <id>Q8BHN0</id>
        <label>Ppm1l</label>
    </interactant>
    <organismsDiffer>true</organismsDiffer>
    <experiments>3</experiments>
</comment>
<comment type="subcellular location">
    <subcellularLocation>
        <location evidence="14">Cell membrane</location>
        <topology evidence="14">Peripheral membrane protein</topology>
    </subcellularLocation>
    <subcellularLocation>
        <location evidence="15">Cell projection</location>
        <location evidence="15">Dendrite</location>
    </subcellularLocation>
    <subcellularLocation>
        <location evidence="15">Cytoplasm</location>
    </subcellularLocation>
</comment>
<comment type="alternative products">
    <event type="alternative splicing"/>
    <isoform>
        <id>P27448-5</id>
        <name>1</name>
        <sequence type="displayed"/>
    </isoform>
    <isoform>
        <id>P27448-2</id>
        <name>2</name>
        <name>CTAK75a</name>
        <sequence type="described" ref="VSP_041582 VSP_004944"/>
    </isoform>
    <isoform>
        <id>P27448-3</id>
        <name>3</name>
        <sequence type="described" ref="VSP_004944"/>
    </isoform>
    <isoform>
        <id>P27448-4</id>
        <name>4</name>
        <sequence type="described" ref="VSP_004945"/>
    </isoform>
    <isoform>
        <id>P27448-6</id>
        <name>5</name>
        <name>p58</name>
        <sequence type="described" ref="VSP_004943 VSP_004944"/>
    </isoform>
    <isoform>
        <id>P27448-7</id>
        <name>6</name>
        <sequence type="described" ref="VSP_041582 VSP_004943"/>
    </isoform>
    <isoform>
        <id>P27448-8</id>
        <name>7</name>
        <sequence type="described" ref="VSP_043197 VSP_043198"/>
    </isoform>
</comment>
<comment type="tissue specificity">
    <text>Ubiquitous.</text>
</comment>
<comment type="PTM">
    <text evidence="8 9">Phosphorylated at Thr-211 by STK11/LKB1 in complex with STE20-related adapter-alpha (STRADA) pseudo kinase and CAB39 (PubMed:14976552). Phosphorylation at Thr-564 by PRKCZ/aPKC inhibits the kinase activity (PubMed:15084291).</text>
</comment>
<comment type="disease" evidence="17">
    <disease id="DI-05463">
        <name>Visual impairment and progressive phthisis bulbi</name>
        <acronym>VIPB</acronym>
        <description>An autosomal recessive, progressive disease characterized by poor vision at birth and development of bilateral phthisis bulbi by adulthood.</description>
        <dbReference type="MIM" id="618283"/>
    </disease>
    <text>The disease may be caused by variants affecting the gene represented in this entry.</text>
</comment>
<comment type="similarity">
    <text evidence="28">Belongs to the protein kinase superfamily. CAMK Ser/Thr protein kinase family. SNF1 subfamily.</text>
</comment>
<proteinExistence type="evidence at protein level"/>
<reference key="1">
    <citation type="journal article" date="1998" name="Cell Growth Differ.">
        <title>C-TAK1 protein kinase phosphorylates human Cdc25C on serine 216 and promotes 14-3-3 protein binding.</title>
        <authorList>
            <person name="Peng C.Y."/>
            <person name="Graves P.R."/>
            <person name="Ogg S."/>
            <person name="Thoma R.S."/>
            <person name="Byrnes M.J. III"/>
            <person name="Wu Z."/>
            <person name="Stephenson M.T."/>
            <person name="Piwnica-Worms H."/>
        </authorList>
    </citation>
    <scope>NUCLEOTIDE SEQUENCE [MRNA] (ISOFORM 3)</scope>
    <scope>VARIANT GLY-443</scope>
    <source>
        <tissue>Cervix carcinoma</tissue>
    </source>
</reference>
<reference key="2">
    <citation type="submission" date="1999-06" db="EMBL/GenBank/DDBJ databases">
        <title>Human serine/threonine protein kinase cTAK1/Kp78/Mark3: Identification of a novel splice variant and a larger 5'UTR.</title>
        <authorList>
            <person name="Waggoner S.N."/>
            <person name="Stephen R."/>
            <person name="Farrar W.L."/>
            <person name="Howard O.M.Z."/>
        </authorList>
    </citation>
    <scope>NUCLEOTIDE SEQUENCE [MRNA] (ISOFORM 2)</scope>
    <scope>VARIANT GLY-443</scope>
    <source>
        <tissue>Monocyte</tissue>
    </source>
</reference>
<reference key="3">
    <citation type="journal article" date="2001" name="Nat. Cell Biol.">
        <title>PAR-1 is a Dishevelled-associated kinase and a positive regulator of Wnt signalling.</title>
        <authorList>
            <person name="Sun T.-Q."/>
            <person name="Lu B."/>
            <person name="Feng J.-J."/>
            <person name="Reinhard C."/>
            <person name="Jan Y.N."/>
            <person name="Fantl W.J."/>
            <person name="Williams L.T."/>
        </authorList>
    </citation>
    <scope>NUCLEOTIDE SEQUENCE [MRNA] (ISOFORM 4)</scope>
</reference>
<reference key="4">
    <citation type="submission" date="2002-01" db="EMBL/GenBank/DDBJ databases">
        <title>Characterization of an alternatively spliced form of MARK3 from human brain.</title>
        <authorList>
            <person name="Drewes G."/>
        </authorList>
    </citation>
    <scope>NUCLEOTIDE SEQUENCE [MRNA] (ISOFORM 1)</scope>
</reference>
<reference key="5">
    <citation type="submission" date="1992-01" db="EMBL/GenBank/DDBJ databases">
        <authorList>
            <person name="Maheshwari K.K."/>
            <person name="Som S."/>
            <person name="Parsa I."/>
        </authorList>
    </citation>
    <scope>NUCLEOTIDE SEQUENCE [MRNA] (ISOFORM 5)</scope>
    <source>
        <tissue>Pancreas</tissue>
    </source>
</reference>
<reference key="6">
    <citation type="submission" date="2003-01" db="EMBL/GenBank/DDBJ databases">
        <title>Full-length cDNA libraries and normalization.</title>
        <authorList>
            <person name="Li W.B."/>
            <person name="Gruber C."/>
            <person name="Jessee J."/>
            <person name="Polayes D."/>
        </authorList>
    </citation>
    <scope>NUCLEOTIDE SEQUENCE [LARGE SCALE MRNA] (ISOFORM 7)</scope>
    <scope>VARIANT PHE-410</scope>
    <source>
        <tissue>Neuroblastoma</tissue>
    </source>
</reference>
<reference key="7">
    <citation type="journal article" date="2003" name="Nature">
        <title>The DNA sequence and analysis of human chromosome 14.</title>
        <authorList>
            <person name="Heilig R."/>
            <person name="Eckenberg R."/>
            <person name="Petit J.-L."/>
            <person name="Fonknechten N."/>
            <person name="Da Silva C."/>
            <person name="Cattolico L."/>
            <person name="Levy M."/>
            <person name="Barbe V."/>
            <person name="De Berardinis V."/>
            <person name="Ureta-Vidal A."/>
            <person name="Pelletier E."/>
            <person name="Vico V."/>
            <person name="Anthouard V."/>
            <person name="Rowen L."/>
            <person name="Madan A."/>
            <person name="Qin S."/>
            <person name="Sun H."/>
            <person name="Du H."/>
            <person name="Pepin K."/>
            <person name="Artiguenave F."/>
            <person name="Robert C."/>
            <person name="Cruaud C."/>
            <person name="Bruels T."/>
            <person name="Jaillon O."/>
            <person name="Friedlander L."/>
            <person name="Samson G."/>
            <person name="Brottier P."/>
            <person name="Cure S."/>
            <person name="Segurens B."/>
            <person name="Aniere F."/>
            <person name="Samain S."/>
            <person name="Crespeau H."/>
            <person name="Abbasi N."/>
            <person name="Aiach N."/>
            <person name="Boscus D."/>
            <person name="Dickhoff R."/>
            <person name="Dors M."/>
            <person name="Dubois I."/>
            <person name="Friedman C."/>
            <person name="Gouyvenoux M."/>
            <person name="James R."/>
            <person name="Madan A."/>
            <person name="Mairey-Estrada B."/>
            <person name="Mangenot S."/>
            <person name="Martins N."/>
            <person name="Menard M."/>
            <person name="Oztas S."/>
            <person name="Ratcliffe A."/>
            <person name="Shaffer T."/>
            <person name="Trask B."/>
            <person name="Vacherie B."/>
            <person name="Bellemere C."/>
            <person name="Belser C."/>
            <person name="Besnard-Gonnet M."/>
            <person name="Bartol-Mavel D."/>
            <person name="Boutard M."/>
            <person name="Briez-Silla S."/>
            <person name="Combette S."/>
            <person name="Dufosse-Laurent V."/>
            <person name="Ferron C."/>
            <person name="Lechaplais C."/>
            <person name="Louesse C."/>
            <person name="Muselet D."/>
            <person name="Magdelenat G."/>
            <person name="Pateau E."/>
            <person name="Petit E."/>
            <person name="Sirvain-Trukniewicz P."/>
            <person name="Trybou A."/>
            <person name="Vega-Czarny N."/>
            <person name="Bataille E."/>
            <person name="Bluet E."/>
            <person name="Bordelais I."/>
            <person name="Dubois M."/>
            <person name="Dumont C."/>
            <person name="Guerin T."/>
            <person name="Haffray S."/>
            <person name="Hammadi R."/>
            <person name="Muanga J."/>
            <person name="Pellouin V."/>
            <person name="Robert D."/>
            <person name="Wunderle E."/>
            <person name="Gauguet G."/>
            <person name="Roy A."/>
            <person name="Sainte-Marthe L."/>
            <person name="Verdier J."/>
            <person name="Verdier-Discala C."/>
            <person name="Hillier L.W."/>
            <person name="Fulton L."/>
            <person name="McPherson J."/>
            <person name="Matsuda F."/>
            <person name="Wilson R."/>
            <person name="Scarpelli C."/>
            <person name="Gyapay G."/>
            <person name="Wincker P."/>
            <person name="Saurin W."/>
            <person name="Quetier F."/>
            <person name="Waterston R."/>
            <person name="Hood L."/>
            <person name="Weissenbach J."/>
        </authorList>
    </citation>
    <scope>NUCLEOTIDE SEQUENCE [LARGE SCALE GENOMIC DNA]</scope>
</reference>
<reference key="8">
    <citation type="submission" date="2005-07" db="EMBL/GenBank/DDBJ databases">
        <authorList>
            <person name="Mural R.J."/>
            <person name="Istrail S."/>
            <person name="Sutton G.G."/>
            <person name="Florea L."/>
            <person name="Halpern A.L."/>
            <person name="Mobarry C.M."/>
            <person name="Lippert R."/>
            <person name="Walenz B."/>
            <person name="Shatkay H."/>
            <person name="Dew I."/>
            <person name="Miller J.R."/>
            <person name="Flanigan M.J."/>
            <person name="Edwards N.J."/>
            <person name="Bolanos R."/>
            <person name="Fasulo D."/>
            <person name="Halldorsson B.V."/>
            <person name="Hannenhalli S."/>
            <person name="Turner R."/>
            <person name="Yooseph S."/>
            <person name="Lu F."/>
            <person name="Nusskern D.R."/>
            <person name="Shue B.C."/>
            <person name="Zheng X.H."/>
            <person name="Zhong F."/>
            <person name="Delcher A.L."/>
            <person name="Huson D.H."/>
            <person name="Kravitz S.A."/>
            <person name="Mouchard L."/>
            <person name="Reinert K."/>
            <person name="Remington K.A."/>
            <person name="Clark A.G."/>
            <person name="Waterman M.S."/>
            <person name="Eichler E.E."/>
            <person name="Adams M.D."/>
            <person name="Hunkapiller M.W."/>
            <person name="Myers E.W."/>
            <person name="Venter J.C."/>
        </authorList>
    </citation>
    <scope>NUCLEOTIDE SEQUENCE [LARGE SCALE GENOMIC DNA]</scope>
</reference>
<reference key="9">
    <citation type="journal article" date="2004" name="Genome Res.">
        <title>The status, quality, and expansion of the NIH full-length cDNA project: the Mammalian Gene Collection (MGC).</title>
        <authorList>
            <consortium name="The MGC Project Team"/>
        </authorList>
    </citation>
    <scope>NUCLEOTIDE SEQUENCE [LARGE SCALE MRNA] (ISOFORM 3)</scope>
    <source>
        <tissue>Cervix</tissue>
    </source>
</reference>
<reference key="10">
    <citation type="submission" date="1999-07" db="EMBL/GenBank/DDBJ databases">
        <title>Homo sapiens mRNA partial sequence for a protein kinase, STK10, similar to p78/C-TAK1.</title>
        <authorList>
            <person name="Reynolds C.H."/>
            <person name="Patel U.A."/>
            <person name="Anderton B.H."/>
        </authorList>
    </citation>
    <scope>NUCLEOTIDE SEQUENCE [MRNA] OF 300-752 (ISOFORM 6)</scope>
    <source>
        <tissue>Urinary bladder</tissue>
    </source>
</reference>
<reference key="11">
    <citation type="journal article" date="2003" name="EMBO J.">
        <title>Functional analysis of C-TAK1 substrate binding and identification of PKP2 as a new C-TAK1 substrate.</title>
        <authorList>
            <person name="Mueller J."/>
            <person name="Ritt D.A."/>
            <person name="Copeland T.D."/>
            <person name="Morrison D.K."/>
        </authorList>
    </citation>
    <scope>FUNCTION</scope>
    <scope>INTERACTION WITH PKP2; KSR1 AND CDC25C</scope>
</reference>
<reference key="12">
    <citation type="journal article" date="2004" name="Curr. Biol.">
        <title>Atypical PKC phosphorylates PAR-1 kinases to regulate localization and activity.</title>
        <authorList>
            <person name="Hurov J.B."/>
            <person name="Watkins J.L."/>
            <person name="Piwnica-Worms H."/>
        </authorList>
    </citation>
    <scope>PHOSPHORYLATION AT THR-564</scope>
</reference>
<reference key="13">
    <citation type="journal article" date="2004" name="EMBO J.">
        <title>LKB1 is a master kinase that activates 13 kinases of the AMPK subfamily, including MARK/PAR-1.</title>
        <authorList>
            <person name="Lizcano J.M."/>
            <person name="Goeransson O."/>
            <person name="Toth R."/>
            <person name="Deak M."/>
            <person name="Morrice N.A."/>
            <person name="Boudeau J."/>
            <person name="Hawley S.A."/>
            <person name="Udd L."/>
            <person name="Maekelae T.P."/>
            <person name="Hardie D.G."/>
            <person name="Alessi D.R."/>
        </authorList>
    </citation>
    <scope>ACTIVITY REGULATION</scope>
    <scope>PHOSPHORYLATION AT THR-211</scope>
    <scope>MUTAGENESIS OF THR-211</scope>
</reference>
<reference key="14">
    <citation type="journal article" date="2006" name="Mol. Biol. Cell">
        <title>Microphthalmia-associated transcription factor interactions with 14-3-3 modulate differentiation of committed myeloid precursors.</title>
        <authorList>
            <person name="Bronisz A."/>
            <person name="Sharma S.M."/>
            <person name="Hu R."/>
            <person name="Godlewski J."/>
            <person name="Tzivion G."/>
            <person name="Mansky K.C."/>
            <person name="Ostrowski M.C."/>
        </authorList>
    </citation>
    <scope>FUNCTION</scope>
    <scope>CATALYTIC ACTIVITY</scope>
</reference>
<reference key="15">
    <citation type="journal article" date="2006" name="Mol. Cell. Biol.">
        <title>New role for hPar-1 kinases EMK and C-TAK1 in regulating localization and activity of class IIa histone deacetylases.</title>
        <authorList>
            <person name="Dequiedt F."/>
            <person name="Martin M."/>
            <person name="Von Blume J."/>
            <person name="Vertommen D."/>
            <person name="Lecomte E."/>
            <person name="Mari N."/>
            <person name="Heinen M.F."/>
            <person name="Bachmann M."/>
            <person name="Twizere J.C."/>
            <person name="Huang M.C."/>
            <person name="Rider M.H."/>
            <person name="Piwnica-Worms H."/>
            <person name="Seufferlein T."/>
            <person name="Kettmann R."/>
        </authorList>
    </citation>
    <scope>FUNCTION</scope>
</reference>
<reference key="16">
    <citation type="journal article" date="2006" name="Mol. Cell. Proteomics">
        <title>Transgenic mouse proteomics identifies new 14-3-3-associated proteins involved in cytoskeletal rearrangements and cell signaling.</title>
        <authorList>
            <person name="Angrand P.O."/>
            <person name="Segura I."/>
            <person name="Voelkel P."/>
            <person name="Ghidelli S."/>
            <person name="Terry R."/>
            <person name="Brajenovic M."/>
            <person name="Vintersten K."/>
            <person name="Klein R."/>
            <person name="Superti-Furga G."/>
            <person name="Drewes G."/>
            <person name="Kuster B."/>
            <person name="Bouwmeester T."/>
            <person name="Acker-Palmer A."/>
        </authorList>
    </citation>
    <scope>INTERACTION WITH YWHAB; YWHAG; YWHAQ AND YWHAZ</scope>
</reference>
<reference key="17">
    <citation type="journal article" date="2008" name="J. Proteome Res.">
        <title>Combining protein-based IMAC, peptide-based IMAC, and MudPIT for efficient phosphoproteomic analysis.</title>
        <authorList>
            <person name="Cantin G.T."/>
            <person name="Yi W."/>
            <person name="Lu B."/>
            <person name="Park S.K."/>
            <person name="Xu T."/>
            <person name="Lee J.-D."/>
            <person name="Yates J.R. III"/>
        </authorList>
    </citation>
    <scope>PHOSPHORYLATION [LARGE SCALE ANALYSIS] AT THR-549</scope>
    <scope>IDENTIFICATION BY MASS SPECTROMETRY [LARGE SCALE ANALYSIS]</scope>
    <source>
        <tissue>Cervix carcinoma</tissue>
    </source>
</reference>
<reference key="18">
    <citation type="journal article" date="2008" name="Mol. Cell">
        <title>Kinase-selective enrichment enables quantitative phosphoproteomics of the kinome across the cell cycle.</title>
        <authorList>
            <person name="Daub H."/>
            <person name="Olsen J.V."/>
            <person name="Bairlein M."/>
            <person name="Gnad F."/>
            <person name="Oppermann F.S."/>
            <person name="Korner R."/>
            <person name="Greff Z."/>
            <person name="Keri G."/>
            <person name="Stemmann O."/>
            <person name="Mann M."/>
        </authorList>
    </citation>
    <scope>PHOSPHORYLATION [LARGE SCALE ANALYSIS] AT SER-383; SER-400; SER-469; THR-549; SER-598 AND SER-643</scope>
    <scope>PHOSPHORYLATION [LARGE SCALE ANALYSIS] AT SER-384 (ISOFORM 5)</scope>
    <scope>PHOSPHORYLATION [LARGE SCALE ANALYSIS] AT SER-407 (ISOFORM 6)</scope>
    <scope>IDENTIFICATION BY MASS SPECTROMETRY [LARGE SCALE ANALYSIS]</scope>
    <source>
        <tissue>Cervix carcinoma</tissue>
    </source>
</reference>
<reference key="19">
    <citation type="journal article" date="2008" name="Proc. Natl. Acad. Sci. U.S.A.">
        <title>A quantitative atlas of mitotic phosphorylation.</title>
        <authorList>
            <person name="Dephoure N."/>
            <person name="Zhou C."/>
            <person name="Villen J."/>
            <person name="Beausoleil S.A."/>
            <person name="Bakalarski C.E."/>
            <person name="Elledge S.J."/>
            <person name="Gygi S.P."/>
        </authorList>
    </citation>
    <scope>IDENTIFICATION BY MASS SPECTROMETRY [LARGE SCALE ANALYSIS]</scope>
    <source>
        <tissue>Cervix carcinoma</tissue>
    </source>
</reference>
<reference key="20">
    <citation type="journal article" date="2009" name="Anal. Chem.">
        <title>Lys-N and trypsin cover complementary parts of the phosphoproteome in a refined SCX-based approach.</title>
        <authorList>
            <person name="Gauci S."/>
            <person name="Helbig A.O."/>
            <person name="Slijper M."/>
            <person name="Krijgsveld J."/>
            <person name="Heck A.J."/>
            <person name="Mohammed S."/>
        </authorList>
    </citation>
    <scope>IDENTIFICATION BY MASS SPECTROMETRY [LARGE SCALE ANALYSIS]</scope>
</reference>
<reference key="21">
    <citation type="journal article" date="2009" name="Mol. Cell. Proteomics">
        <title>Large-scale proteomics analysis of the human kinome.</title>
        <authorList>
            <person name="Oppermann F.S."/>
            <person name="Gnad F."/>
            <person name="Olsen J.V."/>
            <person name="Hornberger R."/>
            <person name="Greff Z."/>
            <person name="Keri G."/>
            <person name="Mann M."/>
            <person name="Daub H."/>
        </authorList>
    </citation>
    <scope>PHOSPHORYLATION [LARGE SCALE ANALYSIS] AT SER-42; SER-383; SER-469 AND SER-643</scope>
    <scope>IDENTIFICATION BY MASS SPECTROMETRY [LARGE SCALE ANALYSIS]</scope>
</reference>
<reference key="22">
    <citation type="journal article" date="2009" name="Sci. Signal.">
        <title>Quantitative phosphoproteomic analysis of T cell receptor signaling reveals system-wide modulation of protein-protein interactions.</title>
        <authorList>
            <person name="Mayya V."/>
            <person name="Lundgren D.H."/>
            <person name="Hwang S.-I."/>
            <person name="Rezaul K."/>
            <person name="Wu L."/>
            <person name="Eng J.K."/>
            <person name="Rodionov V."/>
            <person name="Han D.K."/>
        </authorList>
    </citation>
    <scope>IDENTIFICATION BY MASS SPECTROMETRY [LARGE SCALE ANALYSIS]</scope>
    <source>
        <tissue>Leukemic T-cell</tissue>
    </source>
</reference>
<reference key="23">
    <citation type="journal article" date="2010" name="Cell">
        <title>Kinase associated-1 domains drive MARK/PAR1 kinases to membrane targets by binding acidic phospholipids.</title>
        <authorList>
            <person name="Moravcevic K."/>
            <person name="Mendrola J.M."/>
            <person name="Schmitz K.R."/>
            <person name="Wang Y.H."/>
            <person name="Slochower D."/>
            <person name="Janmey P.A."/>
            <person name="Lemmon M.A."/>
        </authorList>
    </citation>
    <scope>SUBCELLULAR LOCATION</scope>
</reference>
<reference key="24">
    <citation type="journal article" date="2011" name="BMC Syst. Biol.">
        <title>Initial characterization of the human central proteome.</title>
        <authorList>
            <person name="Burkard T.R."/>
            <person name="Planyavsky M."/>
            <person name="Kaupe I."/>
            <person name="Breitwieser F.P."/>
            <person name="Buerckstuemmer T."/>
            <person name="Bennett K.L."/>
            <person name="Superti-Furga G."/>
            <person name="Colinge J."/>
        </authorList>
    </citation>
    <scope>IDENTIFICATION BY MASS SPECTROMETRY [LARGE SCALE ANALYSIS]</scope>
</reference>
<reference key="25">
    <citation type="journal article" date="2011" name="Sci. Signal.">
        <title>System-wide temporal characterization of the proteome and phosphoproteome of human embryonic stem cell differentiation.</title>
        <authorList>
            <person name="Rigbolt K.T."/>
            <person name="Prokhorova T.A."/>
            <person name="Akimov V."/>
            <person name="Henningsen J."/>
            <person name="Johansen P.T."/>
            <person name="Kratchmarova I."/>
            <person name="Kassem M."/>
            <person name="Mann M."/>
            <person name="Olsen J.V."/>
            <person name="Blagoev B."/>
        </authorList>
    </citation>
    <scope>PHOSPHORYLATION [LARGE SCALE ANALYSIS] AT SER-469</scope>
    <scope>IDENTIFICATION BY MASS SPECTROMETRY [LARGE SCALE ANALYSIS]</scope>
</reference>
<reference key="26">
    <citation type="journal article" date="2013" name="J. Proteome Res.">
        <title>Toward a comprehensive characterization of a human cancer cell phosphoproteome.</title>
        <authorList>
            <person name="Zhou H."/>
            <person name="Di Palma S."/>
            <person name="Preisinger C."/>
            <person name="Peng M."/>
            <person name="Polat A.N."/>
            <person name="Heck A.J."/>
            <person name="Mohammed S."/>
        </authorList>
    </citation>
    <scope>PHOSPHORYLATION [LARGE SCALE ANALYSIS] AT SER-376; SER-380; SER-419; SER-469; SER-540; THR-549; SER-583 AND SER-601</scope>
    <scope>IDENTIFICATION BY MASS SPECTROMETRY [LARGE SCALE ANALYSIS]</scope>
    <source>
        <tissue>Cervix carcinoma</tissue>
        <tissue>Erythroleukemia</tissue>
    </source>
</reference>
<reference key="27">
    <citation type="journal article" date="2013" name="NeuroMolecular Med.">
        <title>Role of individual MARK isoforms in phosphorylation of tau at Ser262 in Alzheimer's disease.</title>
        <authorList>
            <person name="Gu G.J."/>
            <person name="Lund H."/>
            <person name="Wu D."/>
            <person name="Blokzijl A."/>
            <person name="Classon C."/>
            <person name="von Euler G."/>
            <person name="Landegren U."/>
            <person name="Sunnemark D."/>
            <person name="Kamali-Moghaddam M."/>
        </authorList>
    </citation>
    <scope>FUNCTION</scope>
    <scope>INTERACTION WITH MAPT</scope>
    <scope>SUBCELLULAR LOCATION</scope>
</reference>
<reference key="28">
    <citation type="journal article" date="2016" name="Genes Dev.">
        <title>DLG5 connects cell polarity and Hippo signaling protein networks by linking PAR-1 with MST1/2.</title>
        <authorList>
            <person name="Kwan J."/>
            <person name="Sczaniecka A."/>
            <person name="Arash E.H."/>
            <person name="Nguyen L."/>
            <person name="Chen C.C."/>
            <person name="Ratkovic S."/>
            <person name="Klezovitch O."/>
            <person name="Attisano L."/>
            <person name="McNeill H."/>
            <person name="Emili A."/>
            <person name="Vasioukhin V."/>
        </authorList>
    </citation>
    <scope>FUNCTION</scope>
    <scope>INTERACTION WITH STK3; STK4 AND DLG5</scope>
</reference>
<reference key="29">
    <citation type="journal article" date="2007" name="Nature">
        <title>Patterns of somatic mutation in human cancer genomes.</title>
        <authorList>
            <person name="Greenman C."/>
            <person name="Stephens P."/>
            <person name="Smith R."/>
            <person name="Dalgliesh G.L."/>
            <person name="Hunter C."/>
            <person name="Bignell G."/>
            <person name="Davies H."/>
            <person name="Teague J."/>
            <person name="Butler A."/>
            <person name="Stevens C."/>
            <person name="Edkins S."/>
            <person name="O'Meara S."/>
            <person name="Vastrik I."/>
            <person name="Schmidt E.E."/>
            <person name="Avis T."/>
            <person name="Barthorpe S."/>
            <person name="Bhamra G."/>
            <person name="Buck G."/>
            <person name="Choudhury B."/>
            <person name="Clements J."/>
            <person name="Cole J."/>
            <person name="Dicks E."/>
            <person name="Forbes S."/>
            <person name="Gray K."/>
            <person name="Halliday K."/>
            <person name="Harrison R."/>
            <person name="Hills K."/>
            <person name="Hinton J."/>
            <person name="Jenkinson A."/>
            <person name="Jones D."/>
            <person name="Menzies A."/>
            <person name="Mironenko T."/>
            <person name="Perry J."/>
            <person name="Raine K."/>
            <person name="Richardson D."/>
            <person name="Shepherd R."/>
            <person name="Small A."/>
            <person name="Tofts C."/>
            <person name="Varian J."/>
            <person name="Webb T."/>
            <person name="West S."/>
            <person name="Widaa S."/>
            <person name="Yates A."/>
            <person name="Cahill D.P."/>
            <person name="Louis D.N."/>
            <person name="Goldstraw P."/>
            <person name="Nicholson A.G."/>
            <person name="Brasseur F."/>
            <person name="Looijenga L."/>
            <person name="Weber B.L."/>
            <person name="Chiew Y.-E."/>
            <person name="DeFazio A."/>
            <person name="Greaves M.F."/>
            <person name="Green A.R."/>
            <person name="Campbell P."/>
            <person name="Birney E."/>
            <person name="Easton D.F."/>
            <person name="Chenevix-Trench G."/>
            <person name="Tan M.-H."/>
            <person name="Khoo S.K."/>
            <person name="Teh B.T."/>
            <person name="Yuen S.T."/>
            <person name="Leung S.Y."/>
            <person name="Wooster R."/>
            <person name="Futreal P.A."/>
            <person name="Stratton M.R."/>
        </authorList>
    </citation>
    <scope>VARIANTS [LARGE SCALE ANALYSIS] ALA-429 AND GLY-443</scope>
</reference>
<reference key="30">
    <citation type="journal article" date="2018" name="Hum. Mol. Genet.">
        <title>Visual impairment and progressive phthisis bulbi caused by recessive pathogenic variant in MARK3.</title>
        <authorList>
            <person name="Ansar M."/>
            <person name="Chung H."/>
            <person name="Waryah Y.M."/>
            <person name="Makrythanasis P."/>
            <person name="Falconnet E."/>
            <person name="Rao A.R."/>
            <person name="Guipponi M."/>
            <person name="Narsani A.K."/>
            <person name="Fingerhut R."/>
            <person name="Santoni F.A."/>
            <person name="Ranza E."/>
            <person name="Waryah A.M."/>
            <person name="Bellen H.J."/>
            <person name="Antonarakis S.E."/>
        </authorList>
    </citation>
    <scope>VARIANT VIPB GLY-570</scope>
    <scope>INVOLVEMENT IN VIPB</scope>
</reference>
<feature type="chain" id="PRO_0000086304" description="MAP/microtubule affinity-regulating kinase 3">
    <location>
        <begin position="1"/>
        <end position="753"/>
    </location>
</feature>
<feature type="domain" description="Protein kinase" evidence="2">
    <location>
        <begin position="56"/>
        <end position="307"/>
    </location>
</feature>
<feature type="domain" description="UBA" evidence="3">
    <location>
        <begin position="326"/>
        <end position="365"/>
    </location>
</feature>
<feature type="domain" description="KA1" evidence="4">
    <location>
        <begin position="704"/>
        <end position="753"/>
    </location>
</feature>
<feature type="region of interest" description="Disordered" evidence="6">
    <location>
        <begin position="1"/>
        <end position="36"/>
    </location>
</feature>
<feature type="region of interest" description="Disordered" evidence="6">
    <location>
        <begin position="370"/>
        <end position="600"/>
    </location>
</feature>
<feature type="region of interest" description="Disordered" evidence="6">
    <location>
        <begin position="632"/>
        <end position="655"/>
    </location>
</feature>
<feature type="compositionally biased region" description="Basic and acidic residues" evidence="6">
    <location>
        <begin position="11"/>
        <end position="28"/>
    </location>
</feature>
<feature type="compositionally biased region" description="Low complexity" evidence="6">
    <location>
        <begin position="374"/>
        <end position="385"/>
    </location>
</feature>
<feature type="compositionally biased region" description="Polar residues" evidence="6">
    <location>
        <begin position="391"/>
        <end position="400"/>
    </location>
</feature>
<feature type="compositionally biased region" description="Polar residues" evidence="6">
    <location>
        <begin position="490"/>
        <end position="513"/>
    </location>
</feature>
<feature type="compositionally biased region" description="Polar residues" evidence="6">
    <location>
        <begin position="521"/>
        <end position="548"/>
    </location>
</feature>
<feature type="compositionally biased region" description="Polar residues" evidence="6">
    <location>
        <begin position="584"/>
        <end position="600"/>
    </location>
</feature>
<feature type="compositionally biased region" description="Basic and acidic residues" evidence="6">
    <location>
        <begin position="645"/>
        <end position="655"/>
    </location>
</feature>
<feature type="active site" description="Proton acceptor" evidence="2 5">
    <location>
        <position position="178"/>
    </location>
</feature>
<feature type="binding site" evidence="2">
    <location>
        <begin position="62"/>
        <end position="70"/>
    </location>
    <ligand>
        <name>ATP</name>
        <dbReference type="ChEBI" id="CHEBI:30616"/>
    </ligand>
</feature>
<feature type="binding site" evidence="2">
    <location>
        <position position="85"/>
    </location>
    <ligand>
        <name>ATP</name>
        <dbReference type="ChEBI" id="CHEBI:30616"/>
    </ligand>
</feature>
<feature type="modified residue" description="Phosphoserine" evidence="31">
    <location>
        <position position="42"/>
    </location>
</feature>
<feature type="modified residue" description="Phosphothreonine; by LKB1" evidence="8">
    <location>
        <position position="211"/>
    </location>
</feature>
<feature type="modified residue" description="Phosphoserine" evidence="1">
    <location>
        <position position="368"/>
    </location>
</feature>
<feature type="modified residue" description="Phosphoserine" evidence="1">
    <location>
        <position position="374"/>
    </location>
</feature>
<feature type="modified residue" description="Phosphoserine" evidence="33">
    <location>
        <position position="376"/>
    </location>
</feature>
<feature type="modified residue" description="Phosphoserine" evidence="33">
    <location>
        <position position="380"/>
    </location>
</feature>
<feature type="modified residue" description="Phosphoserine" evidence="30 31">
    <location>
        <position position="383"/>
    </location>
</feature>
<feature type="modified residue" description="Phosphoserine" evidence="30">
    <location>
        <position position="400"/>
    </location>
</feature>
<feature type="modified residue" description="Phosphoserine" evidence="33">
    <location>
        <position position="419"/>
    </location>
</feature>
<feature type="modified residue" description="Phosphoserine" evidence="30 31 32 33">
    <location>
        <position position="469"/>
    </location>
</feature>
<feature type="modified residue" description="Phosphoserine" evidence="33">
    <location>
        <position position="540"/>
    </location>
</feature>
<feature type="modified residue" description="Phosphoserine" evidence="1">
    <location>
        <position position="543"/>
    </location>
</feature>
<feature type="modified residue" description="Phosphothreonine" evidence="29 30 33">
    <location>
        <position position="549"/>
    </location>
</feature>
<feature type="modified residue" description="Phosphothreonine; by PKC/PRKCZ" evidence="9">
    <location>
        <position position="564"/>
    </location>
</feature>
<feature type="modified residue" description="Phosphoserine" evidence="33">
    <location>
        <position position="583"/>
    </location>
</feature>
<feature type="modified residue" description="Phosphoserine" evidence="30">
    <location>
        <position position="598"/>
    </location>
</feature>
<feature type="modified residue" description="Phosphoserine" evidence="33">
    <location>
        <position position="601"/>
    </location>
</feature>
<feature type="modified residue" description="Phosphoserine" evidence="30 31">
    <location>
        <position position="643"/>
    </location>
</feature>
<feature type="splice variant" id="VSP_041582" description="In isoform 2 and isoform 6." evidence="25">
    <original>Q</original>
    <variation>QGCQAGQTIKVQVSFDLLSLMFTF</variation>
    <location>
        <position position="161"/>
    </location>
</feature>
<feature type="splice variant" id="VSP_043197" description="In isoform 7." evidence="27">
    <location>
        <begin position="179"/>
        <end position="257"/>
    </location>
</feature>
<feature type="splice variant" id="VSP_004943" description="In isoform 5 and isoform 6." evidence="24 26">
    <location>
        <begin position="371"/>
        <end position="386"/>
    </location>
</feature>
<feature type="splice variant" id="VSP_004944" description="In isoform 2, isoform 3 and isoform 5." evidence="22 23 25 26">
    <location>
        <begin position="615"/>
        <end position="638"/>
    </location>
</feature>
<feature type="splice variant" id="VSP_004945" description="In isoform 4." evidence="21">
    <location>
        <begin position="615"/>
        <end position="623"/>
    </location>
</feature>
<feature type="splice variant" id="VSP_043198" description="In isoform 7." evidence="27">
    <location>
        <begin position="624"/>
        <end position="638"/>
    </location>
</feature>
<feature type="sequence variant" id="VAR_080189" description="In dbSNP:rs10137161." evidence="20">
    <original>S</original>
    <variation>F</variation>
    <location>
        <position position="410"/>
    </location>
</feature>
<feature type="sequence variant" id="VAR_040765" evidence="13">
    <original>V</original>
    <variation>A</variation>
    <location>
        <position position="429"/>
    </location>
</feature>
<feature type="sequence variant" id="VAR_046763" description="In dbSNP:rs56305318." evidence="13 18 19">
    <original>S</original>
    <variation>G</variation>
    <location>
        <position position="443"/>
    </location>
</feature>
<feature type="sequence variant" id="VAR_080778" description="In VIPB; dbSNP:rs376395495." evidence="17">
    <original>R</original>
    <variation>G</variation>
    <location>
        <position position="570"/>
    </location>
</feature>
<feature type="mutagenesis site" description="Prevents phosphorylation and activation by STK11/LKB1 complex." evidence="8">
    <original>T</original>
    <variation>A</variation>
    <location>
        <position position="211"/>
    </location>
</feature>
<feature type="sequence conflict" description="In Ref. 5; AAA59991." evidence="28" ref="5">
    <original>E</original>
    <variation>Q</variation>
    <location>
        <position position="125"/>
    </location>
</feature>
<feature type="sequence conflict" description="In Ref. 4; AAL69982 and 5; AAA59991." evidence="28" ref="4 5">
    <original>E</original>
    <variation>K</variation>
    <location>
        <position position="139"/>
    </location>
</feature>
<feature type="sequence conflict" description="In Ref. 2; AAD48007." evidence="28" ref="2">
    <original>R</original>
    <variation>K</variation>
    <location>
        <position position="149"/>
    </location>
</feature>
<feature type="sequence conflict" description="In Ref. 5; AAA59991." evidence="28" ref="5">
    <original>A</original>
    <variation>G</variation>
    <location>
        <position position="425"/>
    </location>
</feature>
<feature type="sequence conflict" description="In Ref. 5; AAA59991." evidence="28" ref="5">
    <original>S</original>
    <variation>T</variation>
    <location>
        <position position="456"/>
    </location>
</feature>
<feature type="sequence conflict" description="In Ref. 5; AAA59991." evidence="28" ref="5">
    <original>A</original>
    <variation>D</variation>
    <location>
        <position position="516"/>
    </location>
</feature>
<feature type="sequence conflict" description="In Ref. 5; AAA59991." evidence="28" ref="5">
    <original>N</original>
    <variation>T</variation>
    <location>
        <position position="603"/>
    </location>
</feature>
<feature type="sequence conflict" description="In Ref. 5; AAA59991." evidence="28" ref="5">
    <original>E</original>
    <variation>K</variation>
    <location>
        <position position="645"/>
    </location>
</feature>
<feature type="strand" evidence="35">
    <location>
        <begin position="56"/>
        <end position="65"/>
    </location>
</feature>
<feature type="strand" evidence="35">
    <location>
        <begin position="68"/>
        <end position="75"/>
    </location>
</feature>
<feature type="turn" evidence="35">
    <location>
        <begin position="76"/>
        <end position="78"/>
    </location>
</feature>
<feature type="strand" evidence="35">
    <location>
        <begin position="81"/>
        <end position="88"/>
    </location>
</feature>
<feature type="helix" evidence="35">
    <location>
        <begin position="89"/>
        <end position="91"/>
    </location>
</feature>
<feature type="helix" evidence="35">
    <location>
        <begin position="94"/>
        <end position="107"/>
    </location>
</feature>
<feature type="strand" evidence="35">
    <location>
        <begin position="118"/>
        <end position="123"/>
    </location>
</feature>
<feature type="strand" evidence="35">
    <location>
        <begin position="125"/>
        <end position="133"/>
    </location>
</feature>
<feature type="helix" evidence="35">
    <location>
        <begin position="140"/>
        <end position="147"/>
    </location>
</feature>
<feature type="helix" evidence="35">
    <location>
        <begin position="152"/>
        <end position="171"/>
    </location>
</feature>
<feature type="helix" evidence="35">
    <location>
        <begin position="181"/>
        <end position="183"/>
    </location>
</feature>
<feature type="strand" evidence="35">
    <location>
        <begin position="184"/>
        <end position="186"/>
    </location>
</feature>
<feature type="strand" evidence="35">
    <location>
        <begin position="192"/>
        <end position="194"/>
    </location>
</feature>
<feature type="helix" evidence="35">
    <location>
        <begin position="201"/>
        <end position="203"/>
    </location>
</feature>
<feature type="strand" evidence="34">
    <location>
        <begin position="204"/>
        <end position="206"/>
    </location>
</feature>
<feature type="helix" evidence="34">
    <location>
        <begin position="208"/>
        <end position="210"/>
    </location>
</feature>
<feature type="strand" evidence="34">
    <location>
        <begin position="213"/>
        <end position="215"/>
    </location>
</feature>
<feature type="helix" evidence="35">
    <location>
        <begin position="216"/>
        <end position="218"/>
    </location>
</feature>
<feature type="helix" evidence="35">
    <location>
        <begin position="221"/>
        <end position="224"/>
    </location>
</feature>
<feature type="helix" evidence="35">
    <location>
        <begin position="232"/>
        <end position="248"/>
    </location>
</feature>
<feature type="helix" evidence="35">
    <location>
        <begin position="258"/>
        <end position="267"/>
    </location>
</feature>
<feature type="helix" evidence="35">
    <location>
        <begin position="278"/>
        <end position="287"/>
    </location>
</feature>
<feature type="helix" evidence="35">
    <location>
        <begin position="292"/>
        <end position="294"/>
    </location>
</feature>
<feature type="helix" evidence="35">
    <location>
        <begin position="298"/>
        <end position="301"/>
    </location>
</feature>
<feature type="turn" evidence="35">
    <location>
        <begin position="305"/>
        <end position="310"/>
    </location>
</feature>
<feature type="helix" evidence="35">
    <location>
        <begin position="329"/>
        <end position="337"/>
    </location>
</feature>
<feature type="helix" evidence="35">
    <location>
        <begin position="342"/>
        <end position="350"/>
    </location>
</feature>
<feature type="helix" evidence="35">
    <location>
        <begin position="356"/>
        <end position="364"/>
    </location>
</feature>
<feature type="modified residue" description="Phosphoserine" evidence="30">
    <location sequence="P27448-6">
        <position position="384"/>
    </location>
</feature>
<feature type="modified residue" description="Phosphoserine" evidence="30">
    <location sequence="P27448-7">
        <position position="407"/>
    </location>
</feature>
<evidence type="ECO:0000250" key="1">
    <source>
        <dbReference type="UniProtKB" id="Q03141"/>
    </source>
</evidence>
<evidence type="ECO:0000255" key="2">
    <source>
        <dbReference type="PROSITE-ProRule" id="PRU00159"/>
    </source>
</evidence>
<evidence type="ECO:0000255" key="3">
    <source>
        <dbReference type="PROSITE-ProRule" id="PRU00212"/>
    </source>
</evidence>
<evidence type="ECO:0000255" key="4">
    <source>
        <dbReference type="PROSITE-ProRule" id="PRU00565"/>
    </source>
</evidence>
<evidence type="ECO:0000255" key="5">
    <source>
        <dbReference type="PROSITE-ProRule" id="PRU10027"/>
    </source>
</evidence>
<evidence type="ECO:0000256" key="6">
    <source>
        <dbReference type="SAM" id="MobiDB-lite"/>
    </source>
</evidence>
<evidence type="ECO:0000269" key="7">
    <source>
    </source>
</evidence>
<evidence type="ECO:0000269" key="8">
    <source>
    </source>
</evidence>
<evidence type="ECO:0000269" key="9">
    <source>
    </source>
</evidence>
<evidence type="ECO:0000269" key="10">
    <source>
    </source>
</evidence>
<evidence type="ECO:0000269" key="11">
    <source>
    </source>
</evidence>
<evidence type="ECO:0000269" key="12">
    <source>
    </source>
</evidence>
<evidence type="ECO:0000269" key="13">
    <source>
    </source>
</evidence>
<evidence type="ECO:0000269" key="14">
    <source>
    </source>
</evidence>
<evidence type="ECO:0000269" key="15">
    <source>
    </source>
</evidence>
<evidence type="ECO:0000269" key="16">
    <source>
    </source>
</evidence>
<evidence type="ECO:0000269" key="17">
    <source>
    </source>
</evidence>
<evidence type="ECO:0000269" key="18">
    <source>
    </source>
</evidence>
<evidence type="ECO:0000269" key="19">
    <source ref="2"/>
</evidence>
<evidence type="ECO:0000269" key="20">
    <source ref="6"/>
</evidence>
<evidence type="ECO:0000303" key="21">
    <source>
    </source>
</evidence>
<evidence type="ECO:0000303" key="22">
    <source>
    </source>
</evidence>
<evidence type="ECO:0000303" key="23">
    <source>
    </source>
</evidence>
<evidence type="ECO:0000303" key="24">
    <source ref="10"/>
</evidence>
<evidence type="ECO:0000303" key="25">
    <source ref="2"/>
</evidence>
<evidence type="ECO:0000303" key="26">
    <source ref="5"/>
</evidence>
<evidence type="ECO:0000303" key="27">
    <source ref="6"/>
</evidence>
<evidence type="ECO:0000305" key="28"/>
<evidence type="ECO:0007744" key="29">
    <source>
    </source>
</evidence>
<evidence type="ECO:0007744" key="30">
    <source>
    </source>
</evidence>
<evidence type="ECO:0007744" key="31">
    <source>
    </source>
</evidence>
<evidence type="ECO:0007744" key="32">
    <source>
    </source>
</evidence>
<evidence type="ECO:0007744" key="33">
    <source>
    </source>
</evidence>
<evidence type="ECO:0007829" key="34">
    <source>
        <dbReference type="PDB" id="3FE3"/>
    </source>
</evidence>
<evidence type="ECO:0007829" key="35">
    <source>
        <dbReference type="PDB" id="8UOJ"/>
    </source>
</evidence>
<sequence length="753" mass="84429">MSTRTPLPTVNERDTENHTSHGDGRQEVTSRTSRSGARCRNSIASCADEQPHIGNYRLLKTIGKGNFAKVKLARHILTGREVAIKIIDKTQLNPTSLQKLFREVRIMKILNHPNIVKLFEVIETEKTLYLIMEYASGGEVFDYLVAHGRMKEKEARSKFRQIVSAVQYCHQKRIVHRDLKAENLLLDADMNIKIADFGFSNEFTVGGKLDTFCGSPPYAAPELFQGKKYDGPEVDVWSLGVILYTLVSGSLPFDGQNLKELRERVLRGKYRIPFYMSTDCENLLKRFLVLNPIKRGTLEQIMKDRWINAGHEEDELKPFVEPELDISDQKRIDIMVGMGYSQEEIQESLSKMKYDEITATYLLLGRKSSELDASDSSSSSNLSLAKVRPSSDLNNSTGQSPHHKVQRSVSSSQKQRRYSDHAGPAIPSVVAYPKRSQTSTADSDLKEDGISSRKSSGSAVGGKGIAPASPMLGNASNPNKADIPERKKSSTVPSSNTASGGMTRRNTYVCSERTTADRHSVIQNGKENSTIPDQRTPVASTHSISSAATPDRIRFPRGTASRSTFHGQPRERRTATYNGPPASPSLSHEATPLSQTRSRGSTNLFSKLTSKLTRRNMSFRFIKRLPTEYERNGRYEGSSRNVSAEQKDENKEAKPRSLRFTWSMKTTSSMDPGDMMREIRKVLDANNCDYEQRERFLLFCVHGDGHAENLVQWEMEVCKLPRLSLNGVRFKRISGTSIAFKNIASKIANELKL</sequence>
<organism>
    <name type="scientific">Homo sapiens</name>
    <name type="common">Human</name>
    <dbReference type="NCBI Taxonomy" id="9606"/>
    <lineage>
        <taxon>Eukaryota</taxon>
        <taxon>Metazoa</taxon>
        <taxon>Chordata</taxon>
        <taxon>Craniata</taxon>
        <taxon>Vertebrata</taxon>
        <taxon>Euteleostomi</taxon>
        <taxon>Mammalia</taxon>
        <taxon>Eutheria</taxon>
        <taxon>Euarchontoglires</taxon>
        <taxon>Primates</taxon>
        <taxon>Haplorrhini</taxon>
        <taxon>Catarrhini</taxon>
        <taxon>Hominidae</taxon>
        <taxon>Homo</taxon>
    </lineage>
</organism>
<accession>P27448</accession>
<accession>A0A0A0MQR8</accession>
<accession>A0A0A0MST9</accession>
<accession>A0A0A0MT23</accession>
<accession>O60219</accession>
<accession>Q86TT8</accession>
<accession>Q8TB41</accession>
<accession>Q8WX83</accession>
<accession>Q96RG1</accession>
<accession>Q9UMY9</accession>
<accession>Q9UN34</accession>